<accession>Q62LN5</accession>
<name>ASTD_BURMA</name>
<gene>
    <name evidence="1" type="primary">astD</name>
    <name type="ordered locus">BMA0594</name>
</gene>
<proteinExistence type="inferred from homology"/>
<organism>
    <name type="scientific">Burkholderia mallei (strain ATCC 23344)</name>
    <dbReference type="NCBI Taxonomy" id="243160"/>
    <lineage>
        <taxon>Bacteria</taxon>
        <taxon>Pseudomonadati</taxon>
        <taxon>Pseudomonadota</taxon>
        <taxon>Betaproteobacteria</taxon>
        <taxon>Burkholderiales</taxon>
        <taxon>Burkholderiaceae</taxon>
        <taxon>Burkholderia</taxon>
        <taxon>pseudomallei group</taxon>
    </lineage>
</organism>
<protein>
    <recommendedName>
        <fullName evidence="1">N-succinylglutamate 5-semialdehyde dehydrogenase</fullName>
        <ecNumber evidence="1">1.2.1.71</ecNumber>
    </recommendedName>
    <alternativeName>
        <fullName evidence="1">Succinylglutamic semialdehyde dehydrogenase</fullName>
        <shortName evidence="1">SGSD</shortName>
    </alternativeName>
</protein>
<feature type="chain" id="PRO_0000262388" description="N-succinylglutamate 5-semialdehyde dehydrogenase">
    <location>
        <begin position="1"/>
        <end position="487"/>
    </location>
</feature>
<feature type="active site" evidence="1">
    <location>
        <position position="244"/>
    </location>
</feature>
<feature type="active site" evidence="1">
    <location>
        <position position="278"/>
    </location>
</feature>
<feature type="binding site" evidence="1">
    <location>
        <begin position="221"/>
        <end position="226"/>
    </location>
    <ligand>
        <name>NAD(+)</name>
        <dbReference type="ChEBI" id="CHEBI:57540"/>
    </ligand>
</feature>
<sequence length="487" mass="51869">MTELFIDGAWRDGAGPVFASRNPGTGEPVWEGAGASADDVERAVASARRAFAAWSALDLDARCAIVKRFAALLVERKEALATMIGRETGKPLWEARTEVASMAAKVDVSIAAYHERTGERRSPTADGVAVLRHRPHGVVAVFGPYNFPGHLPNGHIVPALIAGNTVVFKPSELAPGVARATVEIWRDAGLPAGVLNLVQGEKDTGVALANHRQIDGLFFTGSSDTGTLLHRQFGGRPEIVLALEMGGNNPLVVADVEDIDAAVHHAIQSAFLSAGQRCTCARRILVPRGAFGDRFLERFADVASRITADVYDADPQPFMGAVISARAASRLVAAQAKLLELGAAPIIEMRQRDPALGFVNASILDVTPVRELPDEEHFGPLAQIVRYTDLDDAIARANDTAFGLSAGLLADDETVWNTFRRTIRAGIVNWNRPTNGASSAAPFGGAGRSGNHRPSAYYAADYCAYPMASVESAQLQMPANLSPGLHF</sequence>
<reference key="1">
    <citation type="journal article" date="2004" name="Proc. Natl. Acad. Sci. U.S.A.">
        <title>Structural flexibility in the Burkholderia mallei genome.</title>
        <authorList>
            <person name="Nierman W.C."/>
            <person name="DeShazer D."/>
            <person name="Kim H.S."/>
            <person name="Tettelin H."/>
            <person name="Nelson K.E."/>
            <person name="Feldblyum T.V."/>
            <person name="Ulrich R.L."/>
            <person name="Ronning C.M."/>
            <person name="Brinkac L.M."/>
            <person name="Daugherty S.C."/>
            <person name="Davidsen T.D."/>
            <person name="DeBoy R.T."/>
            <person name="Dimitrov G."/>
            <person name="Dodson R.J."/>
            <person name="Durkin A.S."/>
            <person name="Gwinn M.L."/>
            <person name="Haft D.H."/>
            <person name="Khouri H.M."/>
            <person name="Kolonay J.F."/>
            <person name="Madupu R."/>
            <person name="Mohammoud Y."/>
            <person name="Nelson W.C."/>
            <person name="Radune D."/>
            <person name="Romero C.M."/>
            <person name="Sarria S."/>
            <person name="Selengut J."/>
            <person name="Shamblin C."/>
            <person name="Sullivan S.A."/>
            <person name="White O."/>
            <person name="Yu Y."/>
            <person name="Zafar N."/>
            <person name="Zhou L."/>
            <person name="Fraser C.M."/>
        </authorList>
    </citation>
    <scope>NUCLEOTIDE SEQUENCE [LARGE SCALE GENOMIC DNA]</scope>
    <source>
        <strain>ATCC 23344</strain>
    </source>
</reference>
<evidence type="ECO:0000255" key="1">
    <source>
        <dbReference type="HAMAP-Rule" id="MF_01174"/>
    </source>
</evidence>
<dbReference type="EC" id="1.2.1.71" evidence="1"/>
<dbReference type="EMBL" id="CP000010">
    <property type="protein sequence ID" value="AAU49290.1"/>
    <property type="molecule type" value="Genomic_DNA"/>
</dbReference>
<dbReference type="RefSeq" id="WP_004193383.1">
    <property type="nucleotide sequence ID" value="NC_006348.1"/>
</dbReference>
<dbReference type="RefSeq" id="YP_102384.1">
    <property type="nucleotide sequence ID" value="NC_006348.1"/>
</dbReference>
<dbReference type="SMR" id="Q62LN5"/>
<dbReference type="GeneID" id="92978363"/>
<dbReference type="KEGG" id="bma:BMA0594"/>
<dbReference type="PATRIC" id="fig|243160.12.peg.610"/>
<dbReference type="eggNOG" id="COG1012">
    <property type="taxonomic scope" value="Bacteria"/>
</dbReference>
<dbReference type="HOGENOM" id="CLU_005391_1_0_4"/>
<dbReference type="UniPathway" id="UPA00185">
    <property type="reaction ID" value="UER00282"/>
</dbReference>
<dbReference type="Proteomes" id="UP000006693">
    <property type="component" value="Chromosome 1"/>
</dbReference>
<dbReference type="GO" id="GO:0043824">
    <property type="term" value="F:succinylglutamate-semialdehyde dehydrogenase activity"/>
    <property type="evidence" value="ECO:0007669"/>
    <property type="project" value="UniProtKB-EC"/>
</dbReference>
<dbReference type="GO" id="GO:0019544">
    <property type="term" value="P:arginine catabolic process to glutamate"/>
    <property type="evidence" value="ECO:0007669"/>
    <property type="project" value="UniProtKB-UniRule"/>
</dbReference>
<dbReference type="GO" id="GO:0019545">
    <property type="term" value="P:arginine catabolic process to succinate"/>
    <property type="evidence" value="ECO:0007669"/>
    <property type="project" value="UniProtKB-UniRule"/>
</dbReference>
<dbReference type="CDD" id="cd07095">
    <property type="entry name" value="ALDH_SGSD_AstD"/>
    <property type="match status" value="1"/>
</dbReference>
<dbReference type="FunFam" id="3.40.605.10:FF:000010">
    <property type="entry name" value="N-succinylglutamate 5-semialdehyde dehydrogenase"/>
    <property type="match status" value="1"/>
</dbReference>
<dbReference type="Gene3D" id="3.40.605.10">
    <property type="entry name" value="Aldehyde Dehydrogenase, Chain A, domain 1"/>
    <property type="match status" value="1"/>
</dbReference>
<dbReference type="Gene3D" id="3.40.309.10">
    <property type="entry name" value="Aldehyde Dehydrogenase, Chain A, domain 2"/>
    <property type="match status" value="1"/>
</dbReference>
<dbReference type="HAMAP" id="MF_01174">
    <property type="entry name" value="Aldedh_AstD"/>
    <property type="match status" value="1"/>
</dbReference>
<dbReference type="InterPro" id="IPR016161">
    <property type="entry name" value="Ald_DH/histidinol_DH"/>
</dbReference>
<dbReference type="InterPro" id="IPR016163">
    <property type="entry name" value="Ald_DH_C"/>
</dbReference>
<dbReference type="InterPro" id="IPR016160">
    <property type="entry name" value="Ald_DH_CS_CYS"/>
</dbReference>
<dbReference type="InterPro" id="IPR029510">
    <property type="entry name" value="Ald_DH_CS_GLU"/>
</dbReference>
<dbReference type="InterPro" id="IPR016162">
    <property type="entry name" value="Ald_DH_N"/>
</dbReference>
<dbReference type="InterPro" id="IPR015590">
    <property type="entry name" value="Aldehyde_DH_dom"/>
</dbReference>
<dbReference type="InterPro" id="IPR017649">
    <property type="entry name" value="SuccinylGlu_semiald_DH_AstD"/>
</dbReference>
<dbReference type="NCBIfam" id="TIGR03240">
    <property type="entry name" value="arg_catab_astD"/>
    <property type="match status" value="1"/>
</dbReference>
<dbReference type="NCBIfam" id="NF006992">
    <property type="entry name" value="PRK09457.1"/>
    <property type="match status" value="1"/>
</dbReference>
<dbReference type="PANTHER" id="PTHR11699">
    <property type="entry name" value="ALDEHYDE DEHYDROGENASE-RELATED"/>
    <property type="match status" value="1"/>
</dbReference>
<dbReference type="Pfam" id="PF00171">
    <property type="entry name" value="Aldedh"/>
    <property type="match status" value="1"/>
</dbReference>
<dbReference type="SUPFAM" id="SSF53720">
    <property type="entry name" value="ALDH-like"/>
    <property type="match status" value="1"/>
</dbReference>
<dbReference type="PROSITE" id="PS00070">
    <property type="entry name" value="ALDEHYDE_DEHYDR_CYS"/>
    <property type="match status" value="1"/>
</dbReference>
<dbReference type="PROSITE" id="PS00687">
    <property type="entry name" value="ALDEHYDE_DEHYDR_GLU"/>
    <property type="match status" value="1"/>
</dbReference>
<keyword id="KW-0056">Arginine metabolism</keyword>
<keyword id="KW-0520">NAD</keyword>
<keyword id="KW-0560">Oxidoreductase</keyword>
<keyword id="KW-1185">Reference proteome</keyword>
<comment type="function">
    <text evidence="1">Catalyzes the NAD-dependent reduction of succinylglutamate semialdehyde into succinylglutamate.</text>
</comment>
<comment type="catalytic activity">
    <reaction evidence="1">
        <text>N-succinyl-L-glutamate 5-semialdehyde + NAD(+) + H2O = N-succinyl-L-glutamate + NADH + 2 H(+)</text>
        <dbReference type="Rhea" id="RHEA:10812"/>
        <dbReference type="ChEBI" id="CHEBI:15377"/>
        <dbReference type="ChEBI" id="CHEBI:15378"/>
        <dbReference type="ChEBI" id="CHEBI:57540"/>
        <dbReference type="ChEBI" id="CHEBI:57945"/>
        <dbReference type="ChEBI" id="CHEBI:58520"/>
        <dbReference type="ChEBI" id="CHEBI:58763"/>
        <dbReference type="EC" id="1.2.1.71"/>
    </reaction>
</comment>
<comment type="pathway">
    <text evidence="1">Amino-acid degradation; L-arginine degradation via AST pathway; L-glutamate and succinate from L-arginine: step 4/5.</text>
</comment>
<comment type="similarity">
    <text evidence="1">Belongs to the aldehyde dehydrogenase family. AstD subfamily.</text>
</comment>